<keyword id="KW-0963">Cytoplasm</keyword>
<keyword id="KW-0227">DNA damage</keyword>
<keyword id="KW-0234">DNA repair</keyword>
<keyword id="KW-0378">Hydrolase</keyword>
<keyword id="KW-1185">Reference proteome</keyword>
<name>UNG_RALN1</name>
<protein>
    <recommendedName>
        <fullName evidence="1">Uracil-DNA glycosylase</fullName>
        <shortName evidence="1">UDG</shortName>
        <ecNumber evidence="1">3.2.2.27</ecNumber>
    </recommendedName>
</protein>
<evidence type="ECO:0000255" key="1">
    <source>
        <dbReference type="HAMAP-Rule" id="MF_00148"/>
    </source>
</evidence>
<evidence type="ECO:0000256" key="2">
    <source>
        <dbReference type="SAM" id="MobiDB-lite"/>
    </source>
</evidence>
<accession>Q8XVE4</accession>
<comment type="function">
    <text evidence="1">Excises uracil residues from the DNA which can arise as a result of misincorporation of dUMP residues by DNA polymerase or due to deamination of cytosine.</text>
</comment>
<comment type="catalytic activity">
    <reaction evidence="1">
        <text>Hydrolyzes single-stranded DNA or mismatched double-stranded DNA and polynucleotides, releasing free uracil.</text>
        <dbReference type="EC" id="3.2.2.27"/>
    </reaction>
</comment>
<comment type="subcellular location">
    <subcellularLocation>
        <location evidence="1">Cytoplasm</location>
    </subcellularLocation>
</comment>
<comment type="similarity">
    <text evidence="1">Belongs to the uracil-DNA glycosylase (UDG) superfamily. UNG family.</text>
</comment>
<gene>
    <name evidence="1" type="primary">ung</name>
    <name type="ordered locus">RSc2887</name>
    <name type="ORF">RS00213</name>
</gene>
<feature type="chain" id="PRO_0000176131" description="Uracil-DNA glycosylase">
    <location>
        <begin position="1"/>
        <end position="266"/>
    </location>
</feature>
<feature type="region of interest" description="Disordered" evidence="2">
    <location>
        <begin position="1"/>
        <end position="25"/>
    </location>
</feature>
<feature type="active site" description="Proton acceptor" evidence="1">
    <location>
        <position position="97"/>
    </location>
</feature>
<reference key="1">
    <citation type="journal article" date="2002" name="Nature">
        <title>Genome sequence of the plant pathogen Ralstonia solanacearum.</title>
        <authorList>
            <person name="Salanoubat M."/>
            <person name="Genin S."/>
            <person name="Artiguenave F."/>
            <person name="Gouzy J."/>
            <person name="Mangenot S."/>
            <person name="Arlat M."/>
            <person name="Billault A."/>
            <person name="Brottier P."/>
            <person name="Camus J.-C."/>
            <person name="Cattolico L."/>
            <person name="Chandler M."/>
            <person name="Choisne N."/>
            <person name="Claudel-Renard C."/>
            <person name="Cunnac S."/>
            <person name="Demange N."/>
            <person name="Gaspin C."/>
            <person name="Lavie M."/>
            <person name="Moisan A."/>
            <person name="Robert C."/>
            <person name="Saurin W."/>
            <person name="Schiex T."/>
            <person name="Siguier P."/>
            <person name="Thebault P."/>
            <person name="Whalen M."/>
            <person name="Wincker P."/>
            <person name="Levy M."/>
            <person name="Weissenbach J."/>
            <person name="Boucher C.A."/>
        </authorList>
    </citation>
    <scope>NUCLEOTIDE SEQUENCE [LARGE SCALE GENOMIC DNA]</scope>
    <source>
        <strain>ATCC BAA-1114 / GMI1000</strain>
    </source>
</reference>
<proteinExistence type="inferred from homology"/>
<dbReference type="EC" id="3.2.2.27" evidence="1"/>
<dbReference type="EMBL" id="AL646052">
    <property type="protein sequence ID" value="CAD16594.1"/>
    <property type="molecule type" value="Genomic_DNA"/>
</dbReference>
<dbReference type="RefSeq" id="WP_011002793.1">
    <property type="nucleotide sequence ID" value="NC_003295.1"/>
</dbReference>
<dbReference type="SMR" id="Q8XVE4"/>
<dbReference type="STRING" id="267608.RSc2887"/>
<dbReference type="EnsemblBacteria" id="CAD16594">
    <property type="protein sequence ID" value="CAD16594"/>
    <property type="gene ID" value="RSc2887"/>
</dbReference>
<dbReference type="KEGG" id="rso:RSc2887"/>
<dbReference type="eggNOG" id="COG0692">
    <property type="taxonomic scope" value="Bacteria"/>
</dbReference>
<dbReference type="HOGENOM" id="CLU_032162_3_0_4"/>
<dbReference type="Proteomes" id="UP000001436">
    <property type="component" value="Chromosome"/>
</dbReference>
<dbReference type="GO" id="GO:0005737">
    <property type="term" value="C:cytoplasm"/>
    <property type="evidence" value="ECO:0007669"/>
    <property type="project" value="UniProtKB-SubCell"/>
</dbReference>
<dbReference type="GO" id="GO:0004844">
    <property type="term" value="F:uracil DNA N-glycosylase activity"/>
    <property type="evidence" value="ECO:0007669"/>
    <property type="project" value="UniProtKB-UniRule"/>
</dbReference>
<dbReference type="GO" id="GO:0097510">
    <property type="term" value="P:base-excision repair, AP site formation via deaminated base removal"/>
    <property type="evidence" value="ECO:0007669"/>
    <property type="project" value="TreeGrafter"/>
</dbReference>
<dbReference type="CDD" id="cd10027">
    <property type="entry name" value="UDG-F1-like"/>
    <property type="match status" value="1"/>
</dbReference>
<dbReference type="Gene3D" id="3.40.470.10">
    <property type="entry name" value="Uracil-DNA glycosylase-like domain"/>
    <property type="match status" value="1"/>
</dbReference>
<dbReference type="HAMAP" id="MF_00148">
    <property type="entry name" value="UDG"/>
    <property type="match status" value="1"/>
</dbReference>
<dbReference type="InterPro" id="IPR002043">
    <property type="entry name" value="UDG_fam1"/>
</dbReference>
<dbReference type="InterPro" id="IPR018085">
    <property type="entry name" value="Ura-DNA_Glyclase_AS"/>
</dbReference>
<dbReference type="InterPro" id="IPR005122">
    <property type="entry name" value="Uracil-DNA_glycosylase-like"/>
</dbReference>
<dbReference type="InterPro" id="IPR036895">
    <property type="entry name" value="Uracil-DNA_glycosylase-like_sf"/>
</dbReference>
<dbReference type="NCBIfam" id="NF003588">
    <property type="entry name" value="PRK05254.1-1"/>
    <property type="match status" value="1"/>
</dbReference>
<dbReference type="NCBIfam" id="NF003589">
    <property type="entry name" value="PRK05254.1-2"/>
    <property type="match status" value="1"/>
</dbReference>
<dbReference type="NCBIfam" id="NF003591">
    <property type="entry name" value="PRK05254.1-4"/>
    <property type="match status" value="1"/>
</dbReference>
<dbReference type="NCBIfam" id="NF003592">
    <property type="entry name" value="PRK05254.1-5"/>
    <property type="match status" value="1"/>
</dbReference>
<dbReference type="NCBIfam" id="TIGR00628">
    <property type="entry name" value="ung"/>
    <property type="match status" value="1"/>
</dbReference>
<dbReference type="PANTHER" id="PTHR11264">
    <property type="entry name" value="URACIL-DNA GLYCOSYLASE"/>
    <property type="match status" value="1"/>
</dbReference>
<dbReference type="PANTHER" id="PTHR11264:SF0">
    <property type="entry name" value="URACIL-DNA GLYCOSYLASE"/>
    <property type="match status" value="1"/>
</dbReference>
<dbReference type="Pfam" id="PF03167">
    <property type="entry name" value="UDG"/>
    <property type="match status" value="1"/>
</dbReference>
<dbReference type="SMART" id="SM00986">
    <property type="entry name" value="UDG"/>
    <property type="match status" value="1"/>
</dbReference>
<dbReference type="SMART" id="SM00987">
    <property type="entry name" value="UreE_C"/>
    <property type="match status" value="1"/>
</dbReference>
<dbReference type="SUPFAM" id="SSF52141">
    <property type="entry name" value="Uracil-DNA glycosylase-like"/>
    <property type="match status" value="1"/>
</dbReference>
<dbReference type="PROSITE" id="PS00130">
    <property type="entry name" value="U_DNA_GLYCOSYLASE"/>
    <property type="match status" value="1"/>
</dbReference>
<organism>
    <name type="scientific">Ralstonia nicotianae (strain ATCC BAA-1114 / GMI1000)</name>
    <name type="common">Ralstonia solanacearum</name>
    <dbReference type="NCBI Taxonomy" id="267608"/>
    <lineage>
        <taxon>Bacteria</taxon>
        <taxon>Pseudomonadati</taxon>
        <taxon>Pseudomonadota</taxon>
        <taxon>Betaproteobacteria</taxon>
        <taxon>Burkholderiales</taxon>
        <taxon>Burkholderiaceae</taxon>
        <taxon>Ralstonia</taxon>
        <taxon>Ralstonia solanacearum species complex</taxon>
    </lineage>
</organism>
<sequence>MTRRADPAQATLFDDDEPAGAPTATGGFVPLADQFDALPADWKALLGPCLARTDWPALCAFVDGERAAGKPIFPTEVFHALHLTPVDAVRVIILGQDPYHGTGTVDGREVPQAHGLAFSVPAGVRVPPSLRNIYKEIEAEYGRKLSAGSGNLEGWAQQGVLLLNTVLTVEQGQAASHARRGWERITDCLLEHLARVGHARVFMLWGSHAQAKRALLPEGHLVLEAPHPSPLSAHRGFLGCGHFRAANDWLAAQGQSTIDWLRPQAD</sequence>